<reference key="1">
    <citation type="journal article" date="1997" name="Microbiology">
        <title>Nucleotide sequence and analysis of the phoB-rrnE-groESL region of the Bacillus subtilis chromosome.</title>
        <authorList>
            <person name="Sadaie Y."/>
            <person name="Yata K."/>
            <person name="Fujita M."/>
            <person name="Sagai H."/>
            <person name="Itaya M."/>
            <person name="Kasahara Y."/>
            <person name="Ogasawara N."/>
        </authorList>
    </citation>
    <scope>NUCLEOTIDE SEQUENCE [GENOMIC DNA]</scope>
    <source>
        <strain>168 / JH642</strain>
    </source>
</reference>
<reference key="2">
    <citation type="journal article" date="1997" name="Nature">
        <title>The complete genome sequence of the Gram-positive bacterium Bacillus subtilis.</title>
        <authorList>
            <person name="Kunst F."/>
            <person name="Ogasawara N."/>
            <person name="Moszer I."/>
            <person name="Albertini A.M."/>
            <person name="Alloni G."/>
            <person name="Azevedo V."/>
            <person name="Bertero M.G."/>
            <person name="Bessieres P."/>
            <person name="Bolotin A."/>
            <person name="Borchert S."/>
            <person name="Borriss R."/>
            <person name="Boursier L."/>
            <person name="Brans A."/>
            <person name="Braun M."/>
            <person name="Brignell S.C."/>
            <person name="Bron S."/>
            <person name="Brouillet S."/>
            <person name="Bruschi C.V."/>
            <person name="Caldwell B."/>
            <person name="Capuano V."/>
            <person name="Carter N.M."/>
            <person name="Choi S.-K."/>
            <person name="Codani J.-J."/>
            <person name="Connerton I.F."/>
            <person name="Cummings N.J."/>
            <person name="Daniel R.A."/>
            <person name="Denizot F."/>
            <person name="Devine K.M."/>
            <person name="Duesterhoeft A."/>
            <person name="Ehrlich S.D."/>
            <person name="Emmerson P.T."/>
            <person name="Entian K.-D."/>
            <person name="Errington J."/>
            <person name="Fabret C."/>
            <person name="Ferrari E."/>
            <person name="Foulger D."/>
            <person name="Fritz C."/>
            <person name="Fujita M."/>
            <person name="Fujita Y."/>
            <person name="Fuma S."/>
            <person name="Galizzi A."/>
            <person name="Galleron N."/>
            <person name="Ghim S.-Y."/>
            <person name="Glaser P."/>
            <person name="Goffeau A."/>
            <person name="Golightly E.J."/>
            <person name="Grandi G."/>
            <person name="Guiseppi G."/>
            <person name="Guy B.J."/>
            <person name="Haga K."/>
            <person name="Haiech J."/>
            <person name="Harwood C.R."/>
            <person name="Henaut A."/>
            <person name="Hilbert H."/>
            <person name="Holsappel S."/>
            <person name="Hosono S."/>
            <person name="Hullo M.-F."/>
            <person name="Itaya M."/>
            <person name="Jones L.-M."/>
            <person name="Joris B."/>
            <person name="Karamata D."/>
            <person name="Kasahara Y."/>
            <person name="Klaerr-Blanchard M."/>
            <person name="Klein C."/>
            <person name="Kobayashi Y."/>
            <person name="Koetter P."/>
            <person name="Koningstein G."/>
            <person name="Krogh S."/>
            <person name="Kumano M."/>
            <person name="Kurita K."/>
            <person name="Lapidus A."/>
            <person name="Lardinois S."/>
            <person name="Lauber J."/>
            <person name="Lazarevic V."/>
            <person name="Lee S.-M."/>
            <person name="Levine A."/>
            <person name="Liu H."/>
            <person name="Masuda S."/>
            <person name="Mauel C."/>
            <person name="Medigue C."/>
            <person name="Medina N."/>
            <person name="Mellado R.P."/>
            <person name="Mizuno M."/>
            <person name="Moestl D."/>
            <person name="Nakai S."/>
            <person name="Noback M."/>
            <person name="Noone D."/>
            <person name="O'Reilly M."/>
            <person name="Ogawa K."/>
            <person name="Ogiwara A."/>
            <person name="Oudega B."/>
            <person name="Park S.-H."/>
            <person name="Parro V."/>
            <person name="Pohl T.M."/>
            <person name="Portetelle D."/>
            <person name="Porwollik S."/>
            <person name="Prescott A.M."/>
            <person name="Presecan E."/>
            <person name="Pujic P."/>
            <person name="Purnelle B."/>
            <person name="Rapoport G."/>
            <person name="Rey M."/>
            <person name="Reynolds S."/>
            <person name="Rieger M."/>
            <person name="Rivolta C."/>
            <person name="Rocha E."/>
            <person name="Roche B."/>
            <person name="Rose M."/>
            <person name="Sadaie Y."/>
            <person name="Sato T."/>
            <person name="Scanlan E."/>
            <person name="Schleich S."/>
            <person name="Schroeter R."/>
            <person name="Scoffone F."/>
            <person name="Sekiguchi J."/>
            <person name="Sekowska A."/>
            <person name="Seror S.J."/>
            <person name="Serror P."/>
            <person name="Shin B.-S."/>
            <person name="Soldo B."/>
            <person name="Sorokin A."/>
            <person name="Tacconi E."/>
            <person name="Takagi T."/>
            <person name="Takahashi H."/>
            <person name="Takemaru K."/>
            <person name="Takeuchi M."/>
            <person name="Tamakoshi A."/>
            <person name="Tanaka T."/>
            <person name="Terpstra P."/>
            <person name="Tognoni A."/>
            <person name="Tosato V."/>
            <person name="Uchiyama S."/>
            <person name="Vandenbol M."/>
            <person name="Vannier F."/>
            <person name="Vassarotti A."/>
            <person name="Viari A."/>
            <person name="Wambutt R."/>
            <person name="Wedler E."/>
            <person name="Wedler H."/>
            <person name="Weitzenegger T."/>
            <person name="Winters P."/>
            <person name="Wipat A."/>
            <person name="Yamamoto H."/>
            <person name="Yamane K."/>
            <person name="Yasumoto K."/>
            <person name="Yata K."/>
            <person name="Yoshida K."/>
            <person name="Yoshikawa H.-F."/>
            <person name="Zumstein E."/>
            <person name="Yoshikawa H."/>
            <person name="Danchin A."/>
        </authorList>
    </citation>
    <scope>NUCLEOTIDE SEQUENCE [LARGE SCALE GENOMIC DNA]</scope>
    <source>
        <strain>168</strain>
    </source>
</reference>
<sequence length="165" mass="19247">MSSHYKYPLIFTAFLLIAFCLIFFSYHLIHHVRLEYPNWQGESKDQNWEAVFTKNEDAPNEYSGKLYWIGDTIEIDNTYLESLIVKKDDEVLLSSDTEIPMHDYAGGTFSDGSAKEKSVSFLERLDEHELEGHDITIEVKWKQGNHYSASQLTLNEKTLFDEKQQ</sequence>
<proteinExistence type="predicted"/>
<keyword id="KW-0472">Membrane</keyword>
<keyword id="KW-1185">Reference proteome</keyword>
<keyword id="KW-0812">Transmembrane</keyword>
<keyword id="KW-1133">Transmembrane helix</keyword>
<feature type="chain" id="PRO_0000049505" description="Uncharacterized protein YdhH">
    <location>
        <begin position="1"/>
        <end position="165"/>
    </location>
</feature>
<feature type="transmembrane region" description="Helical" evidence="1">
    <location>
        <begin position="7"/>
        <end position="29"/>
    </location>
</feature>
<evidence type="ECO:0000255" key="1"/>
<evidence type="ECO:0000305" key="2"/>
<dbReference type="EMBL" id="D88802">
    <property type="protein sequence ID" value="BAA19700.1"/>
    <property type="molecule type" value="Genomic_DNA"/>
</dbReference>
<dbReference type="EMBL" id="AL009126">
    <property type="protein sequence ID" value="CAB12395.1"/>
    <property type="molecule type" value="Genomic_DNA"/>
</dbReference>
<dbReference type="PIR" id="D69784">
    <property type="entry name" value="D69784"/>
</dbReference>
<dbReference type="RefSeq" id="NP_388457.1">
    <property type="nucleotide sequence ID" value="NC_000964.3"/>
</dbReference>
<dbReference type="RefSeq" id="WP_003234115.1">
    <property type="nucleotide sequence ID" value="NZ_OZ025638.1"/>
</dbReference>
<dbReference type="SMR" id="O05500"/>
<dbReference type="FunCoup" id="O05500">
    <property type="interactions" value="94"/>
</dbReference>
<dbReference type="STRING" id="224308.BSU05760"/>
<dbReference type="PaxDb" id="224308-BSU05760"/>
<dbReference type="DNASU" id="939877"/>
<dbReference type="EnsemblBacteria" id="CAB12395">
    <property type="protein sequence ID" value="CAB12395"/>
    <property type="gene ID" value="BSU_05760"/>
</dbReference>
<dbReference type="GeneID" id="939877"/>
<dbReference type="KEGG" id="bsu:BSU05760"/>
<dbReference type="PATRIC" id="fig|224308.179.peg.619"/>
<dbReference type="InParanoid" id="O05500"/>
<dbReference type="OrthoDB" id="2915328at2"/>
<dbReference type="BioCyc" id="BSUB:BSU05760-MONOMER"/>
<dbReference type="Proteomes" id="UP000001570">
    <property type="component" value="Chromosome"/>
</dbReference>
<dbReference type="GO" id="GO:0016020">
    <property type="term" value="C:membrane"/>
    <property type="evidence" value="ECO:0007669"/>
    <property type="project" value="UniProtKB-SubCell"/>
</dbReference>
<dbReference type="InterPro" id="IPR032545">
    <property type="entry name" value="DUF4944"/>
</dbReference>
<dbReference type="Pfam" id="PF16302">
    <property type="entry name" value="DUF4944"/>
    <property type="match status" value="1"/>
</dbReference>
<protein>
    <recommendedName>
        <fullName>Uncharacterized protein YdhH</fullName>
    </recommendedName>
</protein>
<organism>
    <name type="scientific">Bacillus subtilis (strain 168)</name>
    <dbReference type="NCBI Taxonomy" id="224308"/>
    <lineage>
        <taxon>Bacteria</taxon>
        <taxon>Bacillati</taxon>
        <taxon>Bacillota</taxon>
        <taxon>Bacilli</taxon>
        <taxon>Bacillales</taxon>
        <taxon>Bacillaceae</taxon>
        <taxon>Bacillus</taxon>
    </lineage>
</organism>
<accession>O05500</accession>
<comment type="subcellular location">
    <subcellularLocation>
        <location evidence="2">Membrane</location>
        <topology evidence="2">Single-pass membrane protein</topology>
    </subcellularLocation>
</comment>
<gene>
    <name type="primary">ydhH</name>
    <name type="ordered locus">BSU05760</name>
</gene>
<name>YDHH_BACSU</name>